<keyword id="KW-0004">4Fe-4S</keyword>
<keyword id="KW-0408">Iron</keyword>
<keyword id="KW-0411">Iron-sulfur</keyword>
<keyword id="KW-0479">Metal-binding</keyword>
<keyword id="KW-0949">S-adenosyl-L-methionine</keyword>
<gene>
    <name type="ordered locus">CLK_3381</name>
</gene>
<reference key="1">
    <citation type="journal article" date="2007" name="PLoS ONE">
        <title>Analysis of the neurotoxin complex genes in Clostridium botulinum A1-A4 and B1 strains: BoNT/A3, /Ba4 and /B1 clusters are located within plasmids.</title>
        <authorList>
            <person name="Smith T.J."/>
            <person name="Hill K.K."/>
            <person name="Foley B.T."/>
            <person name="Detter J.C."/>
            <person name="Munk A.C."/>
            <person name="Bruce D.C."/>
            <person name="Doggett N.A."/>
            <person name="Smith L.A."/>
            <person name="Marks J.D."/>
            <person name="Xie G."/>
            <person name="Brettin T.S."/>
        </authorList>
    </citation>
    <scope>NUCLEOTIDE SEQUENCE [LARGE SCALE GENOMIC DNA]</scope>
    <source>
        <strain>Loch Maree / Type A3</strain>
    </source>
</reference>
<evidence type="ECO:0000255" key="1">
    <source>
        <dbReference type="HAMAP-Rule" id="MF_01251"/>
    </source>
</evidence>
<evidence type="ECO:0000255" key="2">
    <source>
        <dbReference type="PROSITE-ProRule" id="PRU01266"/>
    </source>
</evidence>
<evidence type="ECO:0000256" key="3">
    <source>
        <dbReference type="SAM" id="MobiDB-lite"/>
    </source>
</evidence>
<proteinExistence type="inferred from homology"/>
<name>Y3381_CLOBM</name>
<comment type="cofactor">
    <cofactor evidence="1">
        <name>[4Fe-4S] cluster</name>
        <dbReference type="ChEBI" id="CHEBI:49883"/>
    </cofactor>
    <text evidence="1">Binds 1 [4Fe-4S] cluster. The cluster is coordinated with 3 cysteines and an exchangeable S-adenosyl-L-methionine.</text>
</comment>
<comment type="similarity">
    <text evidence="1">Belongs to the UPF0313 family.</text>
</comment>
<protein>
    <recommendedName>
        <fullName evidence="1">UPF0313 protein CLK_3381</fullName>
    </recommendedName>
</protein>
<sequence length="645" mass="74517">MSNMDFLPISKEDLKKRNIDVLDFIVVTGDAYVDHPSFGTAIIGRVLEREGFTVGIIAQPNWNNIEDFKKLGKPKYGFLVNSGNIDSMVNHYTASKKKRHDDFYSPGGKSGYRPDRAVIVYCNKIKEAFKDSPIIIGGIEASLRRFAHYDYWDNSVRRSILEDSSADLLIYGMGEKPIVQVSNLLRYGMKIDSIKNVRGTTYIEKDISSLKDYIEIPSFEEVSTNKKSYAEAYKIQYYEQDSIRGKTLVQKHKERYVVQNPPQPPLSQEEMDEVYALPYARTYHPMYEAEGGIPAIKEVKFSITSHRGCYGSCSFCALTFHQGRVIQNRSQDSILKEANMMTNMKDFKGYIHDVGGPTANFRHRACKVQEKHGTCKNKQCVFPKACKNLIVDHKEYLSLLRKIRKIPNVKKVFIRSGIRFDYLMYDKNDEFFKELCEHHISGQLKVAPEHISDKVLNLMGKPTRNVYDSFVKKYYDINKKIHKNQFLVPYLMSSHPGSDLKAAIELAQYIKKMGYTPEQVQDFYPTPGSLSTTMYYTGINPLTEEKVYVPKDQKEKRMQRALLQFSILDNYDLVKEALIKAHREDLIGNGPDCLIPYNKPYKKSHKKNNVKNNNNHYNKNNNYNKNKDVSKKNKKNSLSKHKKRK</sequence>
<dbReference type="EMBL" id="CP000962">
    <property type="protein sequence ID" value="ACA55602.1"/>
    <property type="molecule type" value="Genomic_DNA"/>
</dbReference>
<dbReference type="RefSeq" id="WP_012343563.1">
    <property type="nucleotide sequence ID" value="NC_010520.1"/>
</dbReference>
<dbReference type="KEGG" id="cbl:CLK_3381"/>
<dbReference type="HOGENOM" id="CLU_018288_2_0_9"/>
<dbReference type="GO" id="GO:0051539">
    <property type="term" value="F:4 iron, 4 sulfur cluster binding"/>
    <property type="evidence" value="ECO:0007669"/>
    <property type="project" value="UniProtKB-KW"/>
</dbReference>
<dbReference type="GO" id="GO:0003824">
    <property type="term" value="F:catalytic activity"/>
    <property type="evidence" value="ECO:0007669"/>
    <property type="project" value="InterPro"/>
</dbReference>
<dbReference type="GO" id="GO:0005506">
    <property type="term" value="F:iron ion binding"/>
    <property type="evidence" value="ECO:0007669"/>
    <property type="project" value="UniProtKB-UniRule"/>
</dbReference>
<dbReference type="Gene3D" id="3.80.30.20">
    <property type="entry name" value="tm_1862 like domain"/>
    <property type="match status" value="1"/>
</dbReference>
<dbReference type="HAMAP" id="MF_01251">
    <property type="entry name" value="UPF0313"/>
    <property type="match status" value="1"/>
</dbReference>
<dbReference type="InterPro" id="IPR006638">
    <property type="entry name" value="Elp3/MiaA/NifB-like_rSAM"/>
</dbReference>
<dbReference type="InterPro" id="IPR007197">
    <property type="entry name" value="rSAM"/>
</dbReference>
<dbReference type="InterPro" id="IPR023404">
    <property type="entry name" value="rSAM_horseshoe"/>
</dbReference>
<dbReference type="InterPro" id="IPR022946">
    <property type="entry name" value="UPF0313"/>
</dbReference>
<dbReference type="InterPro" id="IPR024560">
    <property type="entry name" value="UPF0313_C"/>
</dbReference>
<dbReference type="InterPro" id="IPR013704">
    <property type="entry name" value="UPF0313_N"/>
</dbReference>
<dbReference type="NCBIfam" id="TIGR03904">
    <property type="entry name" value="SAM_YgiQ"/>
    <property type="match status" value="1"/>
</dbReference>
<dbReference type="PANTHER" id="PTHR32331">
    <property type="entry name" value="UPF0313 PROTEIN YGIQ"/>
    <property type="match status" value="1"/>
</dbReference>
<dbReference type="PANTHER" id="PTHR32331:SF0">
    <property type="entry name" value="UPF0313 PROTEIN YGIQ"/>
    <property type="match status" value="1"/>
</dbReference>
<dbReference type="Pfam" id="PF11842">
    <property type="entry name" value="DUF3362"/>
    <property type="match status" value="1"/>
</dbReference>
<dbReference type="Pfam" id="PF04055">
    <property type="entry name" value="Radical_SAM"/>
    <property type="match status" value="1"/>
</dbReference>
<dbReference type="Pfam" id="PF08497">
    <property type="entry name" value="Radical_SAM_N"/>
    <property type="match status" value="1"/>
</dbReference>
<dbReference type="SFLD" id="SFLDG01082">
    <property type="entry name" value="B12-binding_domain_containing"/>
    <property type="match status" value="1"/>
</dbReference>
<dbReference type="SFLD" id="SFLDS00029">
    <property type="entry name" value="Radical_SAM"/>
    <property type="match status" value="1"/>
</dbReference>
<dbReference type="SFLD" id="SFLDG01069">
    <property type="entry name" value="UPF0313"/>
    <property type="match status" value="1"/>
</dbReference>
<dbReference type="SMART" id="SM00729">
    <property type="entry name" value="Elp3"/>
    <property type="match status" value="1"/>
</dbReference>
<dbReference type="SUPFAM" id="SSF102114">
    <property type="entry name" value="Radical SAM enzymes"/>
    <property type="match status" value="1"/>
</dbReference>
<dbReference type="PROSITE" id="PS51918">
    <property type="entry name" value="RADICAL_SAM"/>
    <property type="match status" value="1"/>
</dbReference>
<accession>B1KSX3</accession>
<organism>
    <name type="scientific">Clostridium botulinum (strain Loch Maree / Type A3)</name>
    <dbReference type="NCBI Taxonomy" id="498214"/>
    <lineage>
        <taxon>Bacteria</taxon>
        <taxon>Bacillati</taxon>
        <taxon>Bacillota</taxon>
        <taxon>Clostridia</taxon>
        <taxon>Eubacteriales</taxon>
        <taxon>Clostridiaceae</taxon>
        <taxon>Clostridium</taxon>
    </lineage>
</organism>
<feature type="chain" id="PRO_1000139929" description="UPF0313 protein CLK_3381">
    <location>
        <begin position="1"/>
        <end position="645"/>
    </location>
</feature>
<feature type="domain" description="Radical SAM core" evidence="2">
    <location>
        <begin position="295"/>
        <end position="566"/>
    </location>
</feature>
<feature type="region of interest" description="Disordered" evidence="3">
    <location>
        <begin position="598"/>
        <end position="645"/>
    </location>
</feature>
<feature type="compositionally biased region" description="Basic residues" evidence="3">
    <location>
        <begin position="600"/>
        <end position="609"/>
    </location>
</feature>
<feature type="compositionally biased region" description="Low complexity" evidence="3">
    <location>
        <begin position="610"/>
        <end position="624"/>
    </location>
</feature>
<feature type="compositionally biased region" description="Basic residues" evidence="3">
    <location>
        <begin position="632"/>
        <end position="645"/>
    </location>
</feature>
<feature type="binding site" evidence="1">
    <location>
        <position position="309"/>
    </location>
    <ligand>
        <name>[4Fe-4S] cluster</name>
        <dbReference type="ChEBI" id="CHEBI:49883"/>
        <note>4Fe-4S-S-AdoMet</note>
    </ligand>
</feature>
<feature type="binding site" evidence="1">
    <location>
        <position position="313"/>
    </location>
    <ligand>
        <name>[4Fe-4S] cluster</name>
        <dbReference type="ChEBI" id="CHEBI:49883"/>
        <note>4Fe-4S-S-AdoMet</note>
    </ligand>
</feature>
<feature type="binding site" evidence="1">
    <location>
        <position position="316"/>
    </location>
    <ligand>
        <name>[4Fe-4S] cluster</name>
        <dbReference type="ChEBI" id="CHEBI:49883"/>
        <note>4Fe-4S-S-AdoMet</note>
    </ligand>
</feature>